<dbReference type="EMBL" id="BA000033">
    <property type="protein sequence ID" value="BAB94265.1"/>
    <property type="molecule type" value="Genomic_DNA"/>
</dbReference>
<dbReference type="RefSeq" id="WP_000540315.1">
    <property type="nucleotide sequence ID" value="NC_003923.1"/>
</dbReference>
<dbReference type="SMR" id="Q8NY36"/>
<dbReference type="KEGG" id="sam:MW0400"/>
<dbReference type="HOGENOM" id="CLU_071589_0_1_9"/>
<dbReference type="GO" id="GO:0005886">
    <property type="term" value="C:plasma membrane"/>
    <property type="evidence" value="ECO:0007669"/>
    <property type="project" value="UniProtKB-SubCell"/>
</dbReference>
<dbReference type="Gene3D" id="2.50.20.40">
    <property type="match status" value="1"/>
</dbReference>
<dbReference type="InterPro" id="IPR007595">
    <property type="entry name" value="Csa"/>
</dbReference>
<dbReference type="InterPro" id="IPR038641">
    <property type="entry name" value="Csa_sf"/>
</dbReference>
<dbReference type="NCBIfam" id="TIGR01742">
    <property type="entry name" value="SA_tandem_lipo"/>
    <property type="match status" value="1"/>
</dbReference>
<dbReference type="Pfam" id="PF04507">
    <property type="entry name" value="DUF576"/>
    <property type="match status" value="1"/>
</dbReference>
<dbReference type="PROSITE" id="PS51257">
    <property type="entry name" value="PROKAR_LIPOPROTEIN"/>
    <property type="match status" value="1"/>
</dbReference>
<name>Y400_STAAW</name>
<keyword id="KW-1003">Cell membrane</keyword>
<keyword id="KW-0449">Lipoprotein</keyword>
<keyword id="KW-0472">Membrane</keyword>
<keyword id="KW-0564">Palmitate</keyword>
<keyword id="KW-0732">Signal</keyword>
<protein>
    <recommendedName>
        <fullName>Uncharacterized lipoprotein MW0400</fullName>
    </recommendedName>
</protein>
<evidence type="ECO:0000255" key="1">
    <source>
        <dbReference type="PROSITE-ProRule" id="PRU00303"/>
    </source>
</evidence>
<evidence type="ECO:0000305" key="2"/>
<gene>
    <name type="primary">lpl13</name>
    <name type="ordered locus">MW0400</name>
</gene>
<reference key="1">
    <citation type="journal article" date="2002" name="Lancet">
        <title>Genome and virulence determinants of high virulence community-acquired MRSA.</title>
        <authorList>
            <person name="Baba T."/>
            <person name="Takeuchi F."/>
            <person name="Kuroda M."/>
            <person name="Yuzawa H."/>
            <person name="Aoki K."/>
            <person name="Oguchi A."/>
            <person name="Nagai Y."/>
            <person name="Iwama N."/>
            <person name="Asano K."/>
            <person name="Naimi T."/>
            <person name="Kuroda H."/>
            <person name="Cui L."/>
            <person name="Yamamoto K."/>
            <person name="Hiramatsu K."/>
        </authorList>
    </citation>
    <scope>NUCLEOTIDE SEQUENCE [LARGE SCALE GENOMIC DNA]</scope>
    <source>
        <strain>MW2</strain>
    </source>
</reference>
<feature type="signal peptide" evidence="1">
    <location>
        <begin position="1"/>
        <end position="22"/>
    </location>
</feature>
<feature type="chain" id="PRO_0000278536" description="Uncharacterized lipoprotein MW0400">
    <location>
        <begin position="23"/>
        <end position="265"/>
    </location>
</feature>
<feature type="lipid moiety-binding region" description="N-palmitoyl cysteine" evidence="1">
    <location>
        <position position="23"/>
    </location>
</feature>
<feature type="lipid moiety-binding region" description="S-diacylglycerol cysteine" evidence="1">
    <location>
        <position position="23"/>
    </location>
</feature>
<comment type="subcellular location">
    <subcellularLocation>
        <location evidence="1">Cell membrane</location>
        <topology evidence="1">Lipid-anchor</topology>
    </subcellularLocation>
</comment>
<comment type="similarity">
    <text evidence="2">Belongs to the staphylococcal tandem lipoprotein family.</text>
</comment>
<proteinExistence type="inferred from homology"/>
<sequence length="265" mass="30955">MGYFKRVLLYIIVMVLSVFIIGCDKSSDTSEKSKGDSKEAQIKKSFAKTLDMYPTENLEDFYDKEGYRDGKFKKGDKGTWVIRSEMTTELKNENMVSKGMVIRLNRNSRTCTGEYFVRIVKEDSEGKVYSDERKYPVKMENNKIIPLKPIDDEKVKKEIEEFKFFVQYGNFKELENYKDGEVTYNPEAPIYSAQYQLKNSDYNVEQLRKRYNIPTQKAPKLLLKGSGNLKGSSVGYKNIEFTFVENKEENIYFTDSVYFNPSEDK</sequence>
<accession>Q8NY36</accession>
<organism>
    <name type="scientific">Staphylococcus aureus (strain MW2)</name>
    <dbReference type="NCBI Taxonomy" id="196620"/>
    <lineage>
        <taxon>Bacteria</taxon>
        <taxon>Bacillati</taxon>
        <taxon>Bacillota</taxon>
        <taxon>Bacilli</taxon>
        <taxon>Bacillales</taxon>
        <taxon>Staphylococcaceae</taxon>
        <taxon>Staphylococcus</taxon>
    </lineage>
</organism>